<organism>
    <name type="scientific">Bovine coronavirus (strain 98TXSF-110-LUN)</name>
    <name type="common">BCoV-LUN</name>
    <name type="synonym">BCV</name>
    <dbReference type="NCBI Taxonomy" id="233264"/>
    <lineage>
        <taxon>Viruses</taxon>
        <taxon>Riboviria</taxon>
        <taxon>Orthornavirae</taxon>
        <taxon>Pisuviricota</taxon>
        <taxon>Pisoniviricetes</taxon>
        <taxon>Nidovirales</taxon>
        <taxon>Cornidovirineae</taxon>
        <taxon>Coronaviridae</taxon>
        <taxon>Orthocoronavirinae</taxon>
        <taxon>Betacoronavirus</taxon>
        <taxon>Embecovirus</taxon>
        <taxon>Betacoronavirus 1</taxon>
    </lineage>
</organism>
<accession>Q8V437</accession>
<comment type="function">
    <text evidence="1">Structural protein that makes short spikes at the surface of the virus. Contains receptor binding and receptor-destroying activities. Mediates de-O-acetylation of N-acetyl-4-O-acetylneuraminic acid, which is probably the receptor determinant recognized by the virus on the surface of erythrocytes and susceptible cells. This receptor-destroying activity is important for virus release as it probably helps preventing self-aggregation and ensures the efficient spread of the progeny virus from cell to cell. May serve as a secondary viral attachment protein for initiating infection, the spike protein being the major one. May become a target for both the humoral and the cellular branches of the immune system.</text>
</comment>
<comment type="catalytic activity">
    <reaction evidence="1">
        <text>N-acetyl-9-O-acetylneuraminate + H2O = N-acetylneuraminate + acetate + H(+)</text>
        <dbReference type="Rhea" id="RHEA:22600"/>
        <dbReference type="ChEBI" id="CHEBI:15377"/>
        <dbReference type="ChEBI" id="CHEBI:15378"/>
        <dbReference type="ChEBI" id="CHEBI:28999"/>
        <dbReference type="ChEBI" id="CHEBI:30089"/>
        <dbReference type="ChEBI" id="CHEBI:35418"/>
        <dbReference type="EC" id="3.1.1.53"/>
    </reaction>
</comment>
<comment type="catalytic activity">
    <reaction evidence="1">
        <text>N-acetyl-4-O-acetylneuraminate + H2O = N-acetylneuraminate + acetate + H(+)</text>
        <dbReference type="Rhea" id="RHEA:25564"/>
        <dbReference type="ChEBI" id="CHEBI:15377"/>
        <dbReference type="ChEBI" id="CHEBI:15378"/>
        <dbReference type="ChEBI" id="CHEBI:29006"/>
        <dbReference type="ChEBI" id="CHEBI:30089"/>
        <dbReference type="ChEBI" id="CHEBI:35418"/>
        <dbReference type="EC" id="3.1.1.53"/>
    </reaction>
</comment>
<comment type="subunit">
    <text evidence="1">Homodimer; disulfide-linked. Forms a complex with the M protein in the pre-Golgi. Associates then with S-M complex to form a ternary complex S-M-HE.</text>
</comment>
<comment type="subcellular location">
    <subcellularLocation>
        <location evidence="1">Virion membrane</location>
        <topology evidence="1">Single-pass type I membrane protein</topology>
    </subcellularLocation>
    <subcellularLocation>
        <location evidence="1">Host cell membrane</location>
        <topology evidence="1">Single-pass type I membrane protein</topology>
    </subcellularLocation>
    <text evidence="1">In infected cells becomes incorporated into the envelope of virions during virus assembly at the endoplasmic reticulum and cis Golgi. However, some may escape incorporation into virions and subsequently migrate to the cell surface.</text>
</comment>
<comment type="PTM">
    <text evidence="1">N-glycosylated in the host RER.</text>
</comment>
<comment type="similarity">
    <text evidence="1">Belongs to the influenza type C/coronaviruses hemagglutinin-esterase family.</text>
</comment>
<dbReference type="EC" id="3.1.1.53" evidence="1"/>
<dbReference type="EMBL" id="AF391542">
    <property type="protein sequence ID" value="AAL57307.1"/>
    <property type="molecule type" value="Genomic_RNA"/>
</dbReference>
<dbReference type="SMR" id="Q8V437"/>
<dbReference type="GlyCosmos" id="Q8V437">
    <property type="glycosylation" value="8 sites, No reported glycans"/>
</dbReference>
<dbReference type="Proteomes" id="UP000008571">
    <property type="component" value="Genome"/>
</dbReference>
<dbReference type="GO" id="GO:0020002">
    <property type="term" value="C:host cell plasma membrane"/>
    <property type="evidence" value="ECO:0007669"/>
    <property type="project" value="UniProtKB-SubCell"/>
</dbReference>
<dbReference type="GO" id="GO:0016020">
    <property type="term" value="C:membrane"/>
    <property type="evidence" value="ECO:0007669"/>
    <property type="project" value="UniProtKB-UniRule"/>
</dbReference>
<dbReference type="GO" id="GO:0019031">
    <property type="term" value="C:viral envelope"/>
    <property type="evidence" value="ECO:0007669"/>
    <property type="project" value="UniProtKB-UniRule"/>
</dbReference>
<dbReference type="GO" id="GO:0055036">
    <property type="term" value="C:virion membrane"/>
    <property type="evidence" value="ECO:0007669"/>
    <property type="project" value="UniProtKB-SubCell"/>
</dbReference>
<dbReference type="GO" id="GO:0046789">
    <property type="term" value="F:host cell surface receptor binding"/>
    <property type="evidence" value="ECO:0007669"/>
    <property type="project" value="UniProtKB-UniRule"/>
</dbReference>
<dbReference type="GO" id="GO:0106331">
    <property type="term" value="F:sialate 4-O-acetylesterase activity"/>
    <property type="evidence" value="ECO:0007669"/>
    <property type="project" value="RHEA"/>
</dbReference>
<dbReference type="GO" id="GO:0106330">
    <property type="term" value="F:sialate 9-O-acetylesterase activity"/>
    <property type="evidence" value="ECO:0007669"/>
    <property type="project" value="RHEA"/>
</dbReference>
<dbReference type="GO" id="GO:0001681">
    <property type="term" value="F:sialate O-acetylesterase activity"/>
    <property type="evidence" value="ECO:0000250"/>
    <property type="project" value="UniProtKB"/>
</dbReference>
<dbReference type="GO" id="GO:0019064">
    <property type="term" value="P:fusion of virus membrane with host plasma membrane"/>
    <property type="evidence" value="ECO:0007669"/>
    <property type="project" value="UniProtKB-UniRule"/>
</dbReference>
<dbReference type="HAMAP" id="MF_04207">
    <property type="entry name" value="BETA_CORONA_HE"/>
    <property type="match status" value="1"/>
</dbReference>
<dbReference type="InterPro" id="IPR008980">
    <property type="entry name" value="Capsid_hemagglutn"/>
</dbReference>
<dbReference type="InterPro" id="IPR042545">
    <property type="entry name" value="HEMA"/>
</dbReference>
<dbReference type="InterPro" id="IPR007142">
    <property type="entry name" value="Hemagglutn-estrase_core"/>
</dbReference>
<dbReference type="InterPro" id="IPR003860">
    <property type="entry name" value="Hemagglutn-estrase_hemagglutn"/>
</dbReference>
<dbReference type="Pfam" id="PF03996">
    <property type="entry name" value="Hema_esterase"/>
    <property type="match status" value="1"/>
</dbReference>
<dbReference type="Pfam" id="PF02710">
    <property type="entry name" value="Hema_HEFG"/>
    <property type="match status" value="1"/>
</dbReference>
<dbReference type="SUPFAM" id="SSF52266">
    <property type="entry name" value="SGNH hydrolase"/>
    <property type="match status" value="1"/>
</dbReference>
<dbReference type="SUPFAM" id="SSF49818">
    <property type="entry name" value="Viral protein domain"/>
    <property type="match status" value="1"/>
</dbReference>
<keyword id="KW-1015">Disulfide bond</keyword>
<keyword id="KW-0325">Glycoprotein</keyword>
<keyword id="KW-0348">Hemagglutinin</keyword>
<keyword id="KW-1032">Host cell membrane</keyword>
<keyword id="KW-1043">Host membrane</keyword>
<keyword id="KW-0378">Hydrolase</keyword>
<keyword id="KW-0472">Membrane</keyword>
<keyword id="KW-0732">Signal</keyword>
<keyword id="KW-0812">Transmembrane</keyword>
<keyword id="KW-1133">Transmembrane helix</keyword>
<keyword id="KW-0261">Viral envelope protein</keyword>
<keyword id="KW-0946">Virion</keyword>
<reference key="1">
    <citation type="journal article" date="2001" name="J. Gen. Virol.">
        <title>Comparison of genomic and predicted amino acid sequences of respiratory and enteric bovine coronaviruses isolated from the same animal with fatal shipping pneumonia.</title>
        <authorList>
            <person name="Chouljenko V.N."/>
            <person name="Lin X.Q."/>
            <person name="Storz J."/>
            <person name="Kousoulas K.G."/>
            <person name="Gorbalenya A.E."/>
        </authorList>
    </citation>
    <scope>NUCLEOTIDE SEQUENCE [GENOMIC RNA]</scope>
</reference>
<protein>
    <recommendedName>
        <fullName evidence="1">Hemagglutinin-esterase</fullName>
        <shortName evidence="1">HE protein</shortName>
        <ecNumber evidence="1">3.1.1.53</ecNumber>
    </recommendedName>
    <alternativeName>
        <fullName evidence="1">E3 glycoprotein</fullName>
    </alternativeName>
</protein>
<proteinExistence type="inferred from homology"/>
<organismHost>
    <name type="scientific">Bos taurus</name>
    <name type="common">Bovine</name>
    <dbReference type="NCBI Taxonomy" id="9913"/>
</organismHost>
<sequence>MFLLPRFVLVSCIIGSLGFDNPPTNVVSHLNGDWFLFGDSRSDCNHVVTTNPRNYSYMDLNPALCGSGKISAKAGNSIFRSFHFTDFYNYTGEGQQIIFYEGVNFTPYHAFKCITSGSNDIWMQNKGLFYTQVYKNMAVYRSLTFVNVPYVYNGSAQSTALCKSGSLVLNNPAYIAREANFGDYYYKVEADFYLSGCDEYIVPLCIFNGKFLSNTKYYDDSQYYFNKDTGVIYGLNSTETITTGFDFNCHYLVLPSGNYLAISNELLLTVPTKAICLNKRKDFTPVQVVDSRWNNARQSDNMTAVACQPPYCYFRNSTTNYVGVYDINHGDAGFTSILSGLLYDSPCFSQQGVFRYDNVSSVWPLYPYGRCPTAADINTPDVPICVYDPLPIILLGILLGVAVIIIVVLLLYFMVDNGTRLHDA</sequence>
<evidence type="ECO:0000255" key="1">
    <source>
        <dbReference type="HAMAP-Rule" id="MF_04207"/>
    </source>
</evidence>
<gene>
    <name evidence="1" type="primary">HE</name>
    <name type="ORF">2b</name>
</gene>
<name>HEMA_CVBLU</name>
<feature type="signal peptide" evidence="1">
    <location>
        <begin position="1"/>
        <end position="16"/>
    </location>
</feature>
<feature type="chain" id="PRO_0000037137" description="Hemagglutinin-esterase" evidence="1">
    <location>
        <begin position="17"/>
        <end position="424"/>
    </location>
</feature>
<feature type="topological domain" description="Virion surface" evidence="1">
    <location>
        <begin position="17"/>
        <end position="392"/>
    </location>
</feature>
<feature type="transmembrane region" description="Helical" evidence="1">
    <location>
        <begin position="393"/>
        <end position="413"/>
    </location>
</feature>
<feature type="topological domain" description="Intravirion" evidence="1">
    <location>
        <begin position="414"/>
        <end position="424"/>
    </location>
</feature>
<feature type="region of interest" description="Esterase domain 1" evidence="1">
    <location>
        <begin position="7"/>
        <end position="127"/>
    </location>
</feature>
<feature type="region of interest" description="Receptor binding" evidence="1">
    <location>
        <begin position="128"/>
        <end position="266"/>
    </location>
</feature>
<feature type="region of interest" description="Esterase domain 2" evidence="1">
    <location>
        <begin position="267"/>
        <end position="379"/>
    </location>
</feature>
<feature type="active site" description="Nucleophile" evidence="1">
    <location>
        <position position="40"/>
    </location>
</feature>
<feature type="active site" description="Charge relay system" evidence="1">
    <location>
        <position position="326"/>
    </location>
</feature>
<feature type="active site" description="Charge relay system" evidence="1">
    <location>
        <position position="329"/>
    </location>
</feature>
<feature type="glycosylation site" description="N-linked (GlcNAc...) asparagine; by host" evidence="1">
    <location>
        <position position="54"/>
    </location>
</feature>
<feature type="glycosylation site" description="N-linked (GlcNAc...) asparagine; by host" evidence="1">
    <location>
        <position position="89"/>
    </location>
</feature>
<feature type="glycosylation site" description="N-linked (GlcNAc...) asparagine; by host" evidence="1">
    <location>
        <position position="153"/>
    </location>
</feature>
<feature type="glycosylation site" description="N-linked (GlcNAc...) asparagine; by host" evidence="1">
    <location>
        <position position="236"/>
    </location>
</feature>
<feature type="glycosylation site" description="N-linked (GlcNAc...) asparagine; by host" evidence="1">
    <location>
        <position position="301"/>
    </location>
</feature>
<feature type="glycosylation site" description="N-linked (GlcNAc...) asparagine; by host" evidence="1">
    <location>
        <position position="316"/>
    </location>
</feature>
<feature type="glycosylation site" description="N-linked (GlcNAc...) asparagine; by host" evidence="1">
    <location>
        <position position="358"/>
    </location>
</feature>
<feature type="glycosylation site" description="N-linked (GlcNAc...) asparagine; by host" evidence="1">
    <location>
        <position position="417"/>
    </location>
</feature>
<feature type="disulfide bond" evidence="1">
    <location>
        <begin position="44"/>
        <end position="65"/>
    </location>
</feature>
<feature type="disulfide bond" evidence="1">
    <location>
        <begin position="113"/>
        <end position="162"/>
    </location>
</feature>
<feature type="disulfide bond" evidence="1">
    <location>
        <begin position="197"/>
        <end position="276"/>
    </location>
</feature>
<feature type="disulfide bond" evidence="1">
    <location>
        <begin position="205"/>
        <end position="249"/>
    </location>
</feature>
<feature type="disulfide bond" evidence="1">
    <location>
        <begin position="307"/>
        <end position="312"/>
    </location>
</feature>
<feature type="disulfide bond" evidence="1">
    <location>
        <begin position="347"/>
        <end position="371"/>
    </location>
</feature>